<keyword id="KW-0997">Cell inner membrane</keyword>
<keyword id="KW-1003">Cell membrane</keyword>
<keyword id="KW-0350">Heme biosynthesis</keyword>
<keyword id="KW-0472">Membrane</keyword>
<keyword id="KW-0808">Transferase</keyword>
<keyword id="KW-0812">Transmembrane</keyword>
<keyword id="KW-1133">Transmembrane helix</keyword>
<comment type="function">
    <text evidence="1">Converts heme B (protoheme IX) to heme O by substitution of the vinyl group on carbon 2 of heme B porphyrin ring with a hydroxyethyl farnesyl side group.</text>
</comment>
<comment type="catalytic activity">
    <reaction evidence="1">
        <text>heme b + (2E,6E)-farnesyl diphosphate + H2O = Fe(II)-heme o + diphosphate</text>
        <dbReference type="Rhea" id="RHEA:28070"/>
        <dbReference type="ChEBI" id="CHEBI:15377"/>
        <dbReference type="ChEBI" id="CHEBI:33019"/>
        <dbReference type="ChEBI" id="CHEBI:60344"/>
        <dbReference type="ChEBI" id="CHEBI:60530"/>
        <dbReference type="ChEBI" id="CHEBI:175763"/>
        <dbReference type="EC" id="2.5.1.141"/>
    </reaction>
</comment>
<comment type="pathway">
    <text evidence="1">Porphyrin-containing compound metabolism; heme O biosynthesis; heme O from protoheme: step 1/1.</text>
</comment>
<comment type="subcellular location">
    <subcellularLocation>
        <location evidence="1">Cell inner membrane</location>
        <topology evidence="1">Multi-pass membrane protein</topology>
    </subcellularLocation>
</comment>
<comment type="miscellaneous">
    <text evidence="1">Carbon 2 of the heme B porphyrin ring is defined according to the Fischer nomenclature.</text>
</comment>
<comment type="similarity">
    <text evidence="1">Belongs to the UbiA prenyltransferase family. Protoheme IX farnesyltransferase subfamily.</text>
</comment>
<reference key="1">
    <citation type="journal article" date="2001" name="Science">
        <title>Mechanisms of evolution in Rickettsia conorii and R. prowazekii.</title>
        <authorList>
            <person name="Ogata H."/>
            <person name="Audic S."/>
            <person name="Renesto-Audiffren P."/>
            <person name="Fournier P.-E."/>
            <person name="Barbe V."/>
            <person name="Samson D."/>
            <person name="Roux V."/>
            <person name="Cossart P."/>
            <person name="Weissenbach J."/>
            <person name="Claverie J.-M."/>
            <person name="Raoult D."/>
        </authorList>
    </citation>
    <scope>NUCLEOTIDE SEQUENCE [LARGE SCALE GENOMIC DNA]</scope>
    <source>
        <strain>ATCC VR-613 / Malish 7</strain>
    </source>
</reference>
<evidence type="ECO:0000255" key="1">
    <source>
        <dbReference type="HAMAP-Rule" id="MF_00154"/>
    </source>
</evidence>
<gene>
    <name evidence="1" type="primary">ctaB</name>
    <name type="ordered locus">RC0469</name>
</gene>
<organism>
    <name type="scientific">Rickettsia conorii (strain ATCC VR-613 / Malish 7)</name>
    <dbReference type="NCBI Taxonomy" id="272944"/>
    <lineage>
        <taxon>Bacteria</taxon>
        <taxon>Pseudomonadati</taxon>
        <taxon>Pseudomonadota</taxon>
        <taxon>Alphaproteobacteria</taxon>
        <taxon>Rickettsiales</taxon>
        <taxon>Rickettsiaceae</taxon>
        <taxon>Rickettsieae</taxon>
        <taxon>Rickettsia</taxon>
        <taxon>spotted fever group</taxon>
    </lineage>
</organism>
<feature type="chain" id="PRO_0000162910" description="Protoheme IX farnesyltransferase">
    <location>
        <begin position="1"/>
        <end position="305"/>
    </location>
</feature>
<feature type="transmembrane region" description="Helical" evidence="1">
    <location>
        <begin position="31"/>
        <end position="51"/>
    </location>
</feature>
<feature type="transmembrane region" description="Helical" evidence="1">
    <location>
        <begin position="52"/>
        <end position="72"/>
    </location>
</feature>
<feature type="transmembrane region" description="Helical" evidence="1">
    <location>
        <begin position="96"/>
        <end position="118"/>
    </location>
</feature>
<feature type="transmembrane region" description="Helical" evidence="1">
    <location>
        <begin position="123"/>
        <end position="145"/>
    </location>
</feature>
<feature type="transmembrane region" description="Helical" evidence="1">
    <location>
        <begin position="151"/>
        <end position="171"/>
    </location>
</feature>
<feature type="transmembrane region" description="Helical" evidence="1">
    <location>
        <begin position="179"/>
        <end position="199"/>
    </location>
</feature>
<feature type="transmembrane region" description="Helical" evidence="1">
    <location>
        <begin position="225"/>
        <end position="245"/>
    </location>
</feature>
<feature type="transmembrane region" description="Helical" evidence="1">
    <location>
        <begin position="247"/>
        <end position="267"/>
    </location>
</feature>
<feature type="transmembrane region" description="Helical" evidence="1">
    <location>
        <begin position="281"/>
        <end position="301"/>
    </location>
</feature>
<sequence length="305" mass="34354">MSSLVRPINLGKINHSQSTVKDYILLMKPRVMSLVIFTGFVGMWLAPYSVHPFIAGIAVVCIALGAGSAGAINMWYDRDIDSLMKRTQKRPIVRGVIESDEALSFGLITGFFAVFFMALCVNLLASFLLLFTIFYYICIYTIWLKRRSIQNIVIGGVSGALPPVIGYAAVSNTISLESIILFLIIFIWTPPHSWALALFCNDDYKNCKVPMMPAVKGTLYTKKQILIYSILLFIVSLMPFFIGMNNFIYLIISGILGVVFLYYAGSLFYDTPDNKQAKRFFAYSIFYLFFIFLLLYSTNTISTIS</sequence>
<accession>Q92IF1</accession>
<protein>
    <recommendedName>
        <fullName evidence="1">Protoheme IX farnesyltransferase</fullName>
        <ecNumber evidence="1">2.5.1.141</ecNumber>
    </recommendedName>
    <alternativeName>
        <fullName evidence="1">Heme B farnesyltransferase</fullName>
    </alternativeName>
    <alternativeName>
        <fullName evidence="1">Heme O synthase</fullName>
    </alternativeName>
</protein>
<proteinExistence type="inferred from homology"/>
<name>COXX_RICCN</name>
<dbReference type="EC" id="2.5.1.141" evidence="1"/>
<dbReference type="EMBL" id="AE006914">
    <property type="protein sequence ID" value="AAL03007.1"/>
    <property type="molecule type" value="Genomic_DNA"/>
</dbReference>
<dbReference type="PIR" id="E97758">
    <property type="entry name" value="E97758"/>
</dbReference>
<dbReference type="SMR" id="Q92IF1"/>
<dbReference type="GeneID" id="927599"/>
<dbReference type="KEGG" id="rco:RC0469"/>
<dbReference type="HOGENOM" id="CLU_029631_0_2_5"/>
<dbReference type="UniPathway" id="UPA00834">
    <property type="reaction ID" value="UER00712"/>
</dbReference>
<dbReference type="Proteomes" id="UP000000816">
    <property type="component" value="Chromosome"/>
</dbReference>
<dbReference type="GO" id="GO:0005886">
    <property type="term" value="C:plasma membrane"/>
    <property type="evidence" value="ECO:0007669"/>
    <property type="project" value="UniProtKB-SubCell"/>
</dbReference>
<dbReference type="GO" id="GO:0008495">
    <property type="term" value="F:protoheme IX farnesyltransferase activity"/>
    <property type="evidence" value="ECO:0007669"/>
    <property type="project" value="UniProtKB-UniRule"/>
</dbReference>
<dbReference type="GO" id="GO:0048034">
    <property type="term" value="P:heme O biosynthetic process"/>
    <property type="evidence" value="ECO:0007669"/>
    <property type="project" value="UniProtKB-UniRule"/>
</dbReference>
<dbReference type="CDD" id="cd13957">
    <property type="entry name" value="PT_UbiA_Cox10"/>
    <property type="match status" value="1"/>
</dbReference>
<dbReference type="Gene3D" id="1.10.357.140">
    <property type="entry name" value="UbiA prenyltransferase"/>
    <property type="match status" value="1"/>
</dbReference>
<dbReference type="HAMAP" id="MF_00154">
    <property type="entry name" value="CyoE_CtaB"/>
    <property type="match status" value="1"/>
</dbReference>
<dbReference type="InterPro" id="IPR006369">
    <property type="entry name" value="Protohaem_IX_farnesylTrfase"/>
</dbReference>
<dbReference type="InterPro" id="IPR000537">
    <property type="entry name" value="UbiA_prenyltransferase"/>
</dbReference>
<dbReference type="InterPro" id="IPR030470">
    <property type="entry name" value="UbiA_prenylTrfase_CS"/>
</dbReference>
<dbReference type="InterPro" id="IPR044878">
    <property type="entry name" value="UbiA_sf"/>
</dbReference>
<dbReference type="NCBIfam" id="TIGR01473">
    <property type="entry name" value="cyoE_ctaB"/>
    <property type="match status" value="1"/>
</dbReference>
<dbReference type="NCBIfam" id="NF003349">
    <property type="entry name" value="PRK04375.1-2"/>
    <property type="match status" value="1"/>
</dbReference>
<dbReference type="PANTHER" id="PTHR43448:SF7">
    <property type="entry name" value="4-HYDROXYBENZOATE SOLANESYLTRANSFERASE"/>
    <property type="match status" value="1"/>
</dbReference>
<dbReference type="PANTHER" id="PTHR43448">
    <property type="entry name" value="PROTOHEME IX FARNESYLTRANSFERASE, MITOCHONDRIAL"/>
    <property type="match status" value="1"/>
</dbReference>
<dbReference type="Pfam" id="PF01040">
    <property type="entry name" value="UbiA"/>
    <property type="match status" value="1"/>
</dbReference>
<dbReference type="PROSITE" id="PS00943">
    <property type="entry name" value="UBIA"/>
    <property type="match status" value="1"/>
</dbReference>